<feature type="chain" id="PRO_0000376195" description="NADH-quinone oxidoreductase subunit B">
    <location>
        <begin position="1"/>
        <end position="181"/>
    </location>
</feature>
<feature type="binding site" evidence="1">
    <location>
        <position position="45"/>
    </location>
    <ligand>
        <name>[4Fe-4S] cluster</name>
        <dbReference type="ChEBI" id="CHEBI:49883"/>
    </ligand>
</feature>
<feature type="binding site" evidence="1">
    <location>
        <position position="46"/>
    </location>
    <ligand>
        <name>[4Fe-4S] cluster</name>
        <dbReference type="ChEBI" id="CHEBI:49883"/>
    </ligand>
</feature>
<feature type="binding site" evidence="1">
    <location>
        <position position="111"/>
    </location>
    <ligand>
        <name>[4Fe-4S] cluster</name>
        <dbReference type="ChEBI" id="CHEBI:49883"/>
    </ligand>
</feature>
<feature type="binding site" evidence="1">
    <location>
        <position position="140"/>
    </location>
    <ligand>
        <name>[4Fe-4S] cluster</name>
        <dbReference type="ChEBI" id="CHEBI:49883"/>
    </ligand>
</feature>
<protein>
    <recommendedName>
        <fullName evidence="1">NADH-quinone oxidoreductase subunit B</fullName>
        <ecNumber evidence="1">7.1.1.-</ecNumber>
    </recommendedName>
    <alternativeName>
        <fullName evidence="1">NADH dehydrogenase I subunit B</fullName>
    </alternativeName>
    <alternativeName>
        <fullName evidence="1">NDH-1 subunit B</fullName>
    </alternativeName>
</protein>
<evidence type="ECO:0000255" key="1">
    <source>
        <dbReference type="HAMAP-Rule" id="MF_01356"/>
    </source>
</evidence>
<accession>Q9RU87</accession>
<proteinExistence type="inferred from homology"/>
<gene>
    <name evidence="1" type="primary">nuoB</name>
    <name type="ordered locus">DR_1505</name>
</gene>
<sequence length="181" mass="20251">MPLKELIDRDWQELESEGVLFSSLEKLVAWGRSNSLWPATFGLACCAIEMMSSTNARNDMSRFGSEVFRASPRQADVMIVAGRLSKKMAPVMRRVYDQMPDPKWVISMGACASSGGMFNNYAVVQNVDSVVPVDIFVPGCPPRPEALIYAVMQLQKKVRGEAFDQLGQQLPMVDAWTRELR</sequence>
<dbReference type="EC" id="7.1.1.-" evidence="1"/>
<dbReference type="EMBL" id="AE000513">
    <property type="protein sequence ID" value="AAF11070.1"/>
    <property type="molecule type" value="Genomic_DNA"/>
</dbReference>
<dbReference type="PIR" id="C75388">
    <property type="entry name" value="C75388"/>
</dbReference>
<dbReference type="RefSeq" id="NP_295228.1">
    <property type="nucleotide sequence ID" value="NC_001263.1"/>
</dbReference>
<dbReference type="RefSeq" id="WP_010888144.1">
    <property type="nucleotide sequence ID" value="NC_001263.1"/>
</dbReference>
<dbReference type="SMR" id="Q9RU87"/>
<dbReference type="STRING" id="243230.DR_1505"/>
<dbReference type="PaxDb" id="243230-DR_1505"/>
<dbReference type="EnsemblBacteria" id="AAF11070">
    <property type="protein sequence ID" value="AAF11070"/>
    <property type="gene ID" value="DR_1505"/>
</dbReference>
<dbReference type="GeneID" id="69517744"/>
<dbReference type="KEGG" id="dra:DR_1505"/>
<dbReference type="PATRIC" id="fig|243230.17.peg.1708"/>
<dbReference type="eggNOG" id="COG0377">
    <property type="taxonomic scope" value="Bacteria"/>
</dbReference>
<dbReference type="HOGENOM" id="CLU_055737_7_3_0"/>
<dbReference type="InParanoid" id="Q9RU87"/>
<dbReference type="OrthoDB" id="9786737at2"/>
<dbReference type="Proteomes" id="UP000002524">
    <property type="component" value="Chromosome 1"/>
</dbReference>
<dbReference type="GO" id="GO:0005886">
    <property type="term" value="C:plasma membrane"/>
    <property type="evidence" value="ECO:0007669"/>
    <property type="project" value="UniProtKB-SubCell"/>
</dbReference>
<dbReference type="GO" id="GO:0045271">
    <property type="term" value="C:respiratory chain complex I"/>
    <property type="evidence" value="ECO:0000318"/>
    <property type="project" value="GO_Central"/>
</dbReference>
<dbReference type="GO" id="GO:0051539">
    <property type="term" value="F:4 iron, 4 sulfur cluster binding"/>
    <property type="evidence" value="ECO:0007669"/>
    <property type="project" value="UniProtKB-KW"/>
</dbReference>
<dbReference type="GO" id="GO:0005506">
    <property type="term" value="F:iron ion binding"/>
    <property type="evidence" value="ECO:0007669"/>
    <property type="project" value="UniProtKB-UniRule"/>
</dbReference>
<dbReference type="GO" id="GO:0008137">
    <property type="term" value="F:NADH dehydrogenase (ubiquinone) activity"/>
    <property type="evidence" value="ECO:0000318"/>
    <property type="project" value="GO_Central"/>
</dbReference>
<dbReference type="GO" id="GO:0050136">
    <property type="term" value="F:NADH:ubiquinone reductase (non-electrogenic) activity"/>
    <property type="evidence" value="ECO:0007669"/>
    <property type="project" value="UniProtKB-UniRule"/>
</dbReference>
<dbReference type="GO" id="GO:0048038">
    <property type="term" value="F:quinone binding"/>
    <property type="evidence" value="ECO:0007669"/>
    <property type="project" value="UniProtKB-KW"/>
</dbReference>
<dbReference type="GO" id="GO:0009060">
    <property type="term" value="P:aerobic respiration"/>
    <property type="evidence" value="ECO:0000318"/>
    <property type="project" value="GO_Central"/>
</dbReference>
<dbReference type="GO" id="GO:0015990">
    <property type="term" value="P:electron transport coupled proton transport"/>
    <property type="evidence" value="ECO:0000318"/>
    <property type="project" value="GO_Central"/>
</dbReference>
<dbReference type="FunFam" id="3.40.50.12280:FF:000004">
    <property type="entry name" value="NADH-quinone oxidoreductase subunit B"/>
    <property type="match status" value="1"/>
</dbReference>
<dbReference type="Gene3D" id="3.40.50.12280">
    <property type="match status" value="1"/>
</dbReference>
<dbReference type="HAMAP" id="MF_01356">
    <property type="entry name" value="NDH1_NuoB"/>
    <property type="match status" value="1"/>
</dbReference>
<dbReference type="InterPro" id="IPR006137">
    <property type="entry name" value="NADH_UbQ_OxRdtase-like_20kDa"/>
</dbReference>
<dbReference type="InterPro" id="IPR006138">
    <property type="entry name" value="NADH_UQ_OxRdtase_20Kd_su"/>
</dbReference>
<dbReference type="NCBIfam" id="TIGR01957">
    <property type="entry name" value="nuoB_fam"/>
    <property type="match status" value="1"/>
</dbReference>
<dbReference type="NCBIfam" id="NF005012">
    <property type="entry name" value="PRK06411.1"/>
    <property type="match status" value="1"/>
</dbReference>
<dbReference type="PANTHER" id="PTHR11995">
    <property type="entry name" value="NADH DEHYDROGENASE"/>
    <property type="match status" value="1"/>
</dbReference>
<dbReference type="PANTHER" id="PTHR11995:SF14">
    <property type="entry name" value="NADH DEHYDROGENASE [UBIQUINONE] IRON-SULFUR PROTEIN 7, MITOCHONDRIAL"/>
    <property type="match status" value="1"/>
</dbReference>
<dbReference type="Pfam" id="PF01058">
    <property type="entry name" value="Oxidored_q6"/>
    <property type="match status" value="1"/>
</dbReference>
<dbReference type="SUPFAM" id="SSF56770">
    <property type="entry name" value="HydA/Nqo6-like"/>
    <property type="match status" value="1"/>
</dbReference>
<dbReference type="PROSITE" id="PS01150">
    <property type="entry name" value="COMPLEX1_20K"/>
    <property type="match status" value="1"/>
</dbReference>
<reference key="1">
    <citation type="journal article" date="1999" name="Science">
        <title>Genome sequence of the radioresistant bacterium Deinococcus radiodurans R1.</title>
        <authorList>
            <person name="White O."/>
            <person name="Eisen J.A."/>
            <person name="Heidelberg J.F."/>
            <person name="Hickey E.K."/>
            <person name="Peterson J.D."/>
            <person name="Dodson R.J."/>
            <person name="Haft D.H."/>
            <person name="Gwinn M.L."/>
            <person name="Nelson W.C."/>
            <person name="Richardson D.L."/>
            <person name="Moffat K.S."/>
            <person name="Qin H."/>
            <person name="Jiang L."/>
            <person name="Pamphile W."/>
            <person name="Crosby M."/>
            <person name="Shen M."/>
            <person name="Vamathevan J.J."/>
            <person name="Lam P."/>
            <person name="McDonald L.A."/>
            <person name="Utterback T.R."/>
            <person name="Zalewski C."/>
            <person name="Makarova K.S."/>
            <person name="Aravind L."/>
            <person name="Daly M.J."/>
            <person name="Minton K.W."/>
            <person name="Fleischmann R.D."/>
            <person name="Ketchum K.A."/>
            <person name="Nelson K.E."/>
            <person name="Salzberg S.L."/>
            <person name="Smith H.O."/>
            <person name="Venter J.C."/>
            <person name="Fraser C.M."/>
        </authorList>
    </citation>
    <scope>NUCLEOTIDE SEQUENCE [LARGE SCALE GENOMIC DNA]</scope>
    <source>
        <strain>ATCC 13939 / DSM 20539 / JCM 16871 / CCUG 27074 / LMG 4051 / NBRC 15346 / NCIMB 9279 / VKM B-1422 / R1</strain>
    </source>
</reference>
<comment type="function">
    <text evidence="1">NDH-1 shuttles electrons from NADH, via FMN and iron-sulfur (Fe-S) centers, to quinones in the respiratory chain. The immediate electron acceptor for the enzyme in this species is believed to be a menaquinone. Couples the redox reaction to proton translocation (for every two electrons transferred, four hydrogen ions are translocated across the cytoplasmic membrane), and thus conserves the redox energy in a proton gradient.</text>
</comment>
<comment type="catalytic activity">
    <reaction evidence="1">
        <text>a quinone + NADH + 5 H(+)(in) = a quinol + NAD(+) + 4 H(+)(out)</text>
        <dbReference type="Rhea" id="RHEA:57888"/>
        <dbReference type="ChEBI" id="CHEBI:15378"/>
        <dbReference type="ChEBI" id="CHEBI:24646"/>
        <dbReference type="ChEBI" id="CHEBI:57540"/>
        <dbReference type="ChEBI" id="CHEBI:57945"/>
        <dbReference type="ChEBI" id="CHEBI:132124"/>
    </reaction>
</comment>
<comment type="cofactor">
    <cofactor evidence="1">
        <name>[4Fe-4S] cluster</name>
        <dbReference type="ChEBI" id="CHEBI:49883"/>
    </cofactor>
    <text evidence="1">Binds 1 [4Fe-4S] cluster.</text>
</comment>
<comment type="subunit">
    <text evidence="1">NDH-1 is composed of 15 different subunits. Subunits NuoB, C, D, E, F, and G constitute the peripheral sector of the complex.</text>
</comment>
<comment type="subcellular location">
    <subcellularLocation>
        <location evidence="1">Cell membrane</location>
        <topology evidence="1">Peripheral membrane protein</topology>
        <orientation evidence="1">Cytoplasmic side</orientation>
    </subcellularLocation>
</comment>
<comment type="similarity">
    <text evidence="1">Belongs to the complex I 20 kDa subunit family.</text>
</comment>
<name>NUOB_DEIRA</name>
<keyword id="KW-0004">4Fe-4S</keyword>
<keyword id="KW-1003">Cell membrane</keyword>
<keyword id="KW-0408">Iron</keyword>
<keyword id="KW-0411">Iron-sulfur</keyword>
<keyword id="KW-0472">Membrane</keyword>
<keyword id="KW-0479">Metal-binding</keyword>
<keyword id="KW-0520">NAD</keyword>
<keyword id="KW-0874">Quinone</keyword>
<keyword id="KW-1185">Reference proteome</keyword>
<keyword id="KW-1278">Translocase</keyword>
<keyword id="KW-0813">Transport</keyword>
<organism>
    <name type="scientific">Deinococcus radiodurans (strain ATCC 13939 / DSM 20539 / JCM 16871 / CCUG 27074 / LMG 4051 / NBRC 15346 / NCIMB 9279 / VKM B-1422 / R1)</name>
    <dbReference type="NCBI Taxonomy" id="243230"/>
    <lineage>
        <taxon>Bacteria</taxon>
        <taxon>Thermotogati</taxon>
        <taxon>Deinococcota</taxon>
        <taxon>Deinococci</taxon>
        <taxon>Deinococcales</taxon>
        <taxon>Deinococcaceae</taxon>
        <taxon>Deinococcus</taxon>
    </lineage>
</organism>